<comment type="subunit">
    <text evidence="1">Part of the 50S ribosomal subunit.</text>
</comment>
<comment type="subcellular location">
    <subcellularLocation>
        <location>Plastid</location>
        <location>Chloroplast</location>
    </subcellularLocation>
</comment>
<comment type="similarity">
    <text evidence="4">Belongs to the universal ribosomal protein uL2 family.</text>
</comment>
<comment type="caution">
    <text evidence="4">There is 1 gene for this protein in each of the chloroplast inverted repeats; while they are usually identical, in this organism they are not. The other copy is AC Q14F95.</text>
</comment>
<proteinExistence type="inferred from homology"/>
<organism>
    <name type="scientific">Populus alba</name>
    <name type="common">White poplar</name>
    <dbReference type="NCBI Taxonomy" id="43335"/>
    <lineage>
        <taxon>Eukaryota</taxon>
        <taxon>Viridiplantae</taxon>
        <taxon>Streptophyta</taxon>
        <taxon>Embryophyta</taxon>
        <taxon>Tracheophyta</taxon>
        <taxon>Spermatophyta</taxon>
        <taxon>Magnoliopsida</taxon>
        <taxon>eudicotyledons</taxon>
        <taxon>Gunneridae</taxon>
        <taxon>Pentapetalae</taxon>
        <taxon>rosids</taxon>
        <taxon>fabids</taxon>
        <taxon>Malpighiales</taxon>
        <taxon>Salicaceae</taxon>
        <taxon>Saliceae</taxon>
        <taxon>Populus</taxon>
    </lineage>
</organism>
<keyword id="KW-0150">Chloroplast</keyword>
<keyword id="KW-0934">Plastid</keyword>
<keyword id="KW-0687">Ribonucleoprotein</keyword>
<keyword id="KW-0689">Ribosomal protein</keyword>
<protein>
    <recommendedName>
        <fullName evidence="2">Large ribosomal subunit protein uL2cy</fullName>
    </recommendedName>
    <alternativeName>
        <fullName evidence="4">50S ribosomal protein L2-B, chloroplastic</fullName>
    </alternativeName>
</protein>
<gene>
    <name type="primary">rpl2-B</name>
</gene>
<accession>Q14FB6</accession>
<sequence>MAIHLYKTSTPSTRNGAVDSQVKSNTRNNLIYGQHRCSKGRNARGIITARHRGGGHKRLYRKIDFRRNEKYIYGRIVTIEYDPNRNAYICLIHYGDGEKRYILHPRGAIIGDTIISGTEVPIKMGNALPLTDMPLGTAIHNIEITLGRGGQLARAAGAVAKLIAKEGKSATLKLPSGEVRLISKNCSATVGQVGNAGVNQKSLGRAGSKCWLGKRPVVRGVVMNPVDHPHGGGEGRAPIGRKKPATPWGYPALGRRSRKRNKYSDNLILRRRSK</sequence>
<feature type="chain" id="PRO_0000277099" description="Large ribosomal subunit protein uL2cy">
    <location>
        <begin position="1"/>
        <end position="274"/>
    </location>
</feature>
<feature type="region of interest" description="Disordered" evidence="3">
    <location>
        <begin position="1"/>
        <end position="20"/>
    </location>
</feature>
<feature type="region of interest" description="Disordered" evidence="3">
    <location>
        <begin position="224"/>
        <end position="274"/>
    </location>
</feature>
<evidence type="ECO:0000250" key="1"/>
<evidence type="ECO:0000255" key="2">
    <source>
        <dbReference type="HAMAP-Rule" id="MF_01320"/>
    </source>
</evidence>
<evidence type="ECO:0000256" key="3">
    <source>
        <dbReference type="SAM" id="MobiDB-lite"/>
    </source>
</evidence>
<evidence type="ECO:0000305" key="4"/>
<geneLocation type="chloroplast"/>
<dbReference type="EMBL" id="AP008956">
    <property type="protein sequence ID" value="BAE97246.1"/>
    <property type="molecule type" value="Genomic_DNA"/>
</dbReference>
<dbReference type="SMR" id="Q14FB6"/>
<dbReference type="KEGG" id="palz:4178246"/>
<dbReference type="OrthoDB" id="18550at3646"/>
<dbReference type="GO" id="GO:0009507">
    <property type="term" value="C:chloroplast"/>
    <property type="evidence" value="ECO:0007669"/>
    <property type="project" value="UniProtKB-SubCell"/>
</dbReference>
<dbReference type="GO" id="GO:0005762">
    <property type="term" value="C:mitochondrial large ribosomal subunit"/>
    <property type="evidence" value="ECO:0007669"/>
    <property type="project" value="TreeGrafter"/>
</dbReference>
<dbReference type="GO" id="GO:0019843">
    <property type="term" value="F:rRNA binding"/>
    <property type="evidence" value="ECO:0007669"/>
    <property type="project" value="UniProtKB-UniRule"/>
</dbReference>
<dbReference type="GO" id="GO:0003735">
    <property type="term" value="F:structural constituent of ribosome"/>
    <property type="evidence" value="ECO:0007669"/>
    <property type="project" value="InterPro"/>
</dbReference>
<dbReference type="GO" id="GO:0016740">
    <property type="term" value="F:transferase activity"/>
    <property type="evidence" value="ECO:0007669"/>
    <property type="project" value="InterPro"/>
</dbReference>
<dbReference type="GO" id="GO:0032543">
    <property type="term" value="P:mitochondrial translation"/>
    <property type="evidence" value="ECO:0007669"/>
    <property type="project" value="TreeGrafter"/>
</dbReference>
<dbReference type="FunFam" id="4.10.950.10:FF:000001">
    <property type="entry name" value="50S ribosomal protein L2"/>
    <property type="match status" value="1"/>
</dbReference>
<dbReference type="FunFam" id="2.30.30.30:FF:000008">
    <property type="entry name" value="50S ribosomal protein L2, chloroplastic"/>
    <property type="match status" value="1"/>
</dbReference>
<dbReference type="FunFam" id="2.40.50.140:FF:000029">
    <property type="entry name" value="50S ribosomal protein L2, chloroplastic"/>
    <property type="match status" value="1"/>
</dbReference>
<dbReference type="Gene3D" id="2.30.30.30">
    <property type="match status" value="1"/>
</dbReference>
<dbReference type="Gene3D" id="2.40.50.140">
    <property type="entry name" value="Nucleic acid-binding proteins"/>
    <property type="match status" value="1"/>
</dbReference>
<dbReference type="Gene3D" id="4.10.950.10">
    <property type="entry name" value="Ribosomal protein L2, domain 3"/>
    <property type="match status" value="1"/>
</dbReference>
<dbReference type="HAMAP" id="MF_01320_B">
    <property type="entry name" value="Ribosomal_uL2_B"/>
    <property type="match status" value="1"/>
</dbReference>
<dbReference type="InterPro" id="IPR012340">
    <property type="entry name" value="NA-bd_OB-fold"/>
</dbReference>
<dbReference type="InterPro" id="IPR014722">
    <property type="entry name" value="Rib_uL2_dom2"/>
</dbReference>
<dbReference type="InterPro" id="IPR002171">
    <property type="entry name" value="Ribosomal_uL2"/>
</dbReference>
<dbReference type="InterPro" id="IPR005880">
    <property type="entry name" value="Ribosomal_uL2_bac/org-type"/>
</dbReference>
<dbReference type="InterPro" id="IPR022669">
    <property type="entry name" value="Ribosomal_uL2_C"/>
</dbReference>
<dbReference type="InterPro" id="IPR022671">
    <property type="entry name" value="Ribosomal_uL2_CS"/>
</dbReference>
<dbReference type="InterPro" id="IPR014726">
    <property type="entry name" value="Ribosomal_uL2_dom3"/>
</dbReference>
<dbReference type="InterPro" id="IPR022666">
    <property type="entry name" value="Ribosomal_uL2_RNA-bd_dom"/>
</dbReference>
<dbReference type="InterPro" id="IPR008991">
    <property type="entry name" value="Translation_prot_SH3-like_sf"/>
</dbReference>
<dbReference type="NCBIfam" id="TIGR01171">
    <property type="entry name" value="rplB_bact"/>
    <property type="match status" value="1"/>
</dbReference>
<dbReference type="PANTHER" id="PTHR13691:SF5">
    <property type="entry name" value="LARGE RIBOSOMAL SUBUNIT PROTEIN UL2M"/>
    <property type="match status" value="1"/>
</dbReference>
<dbReference type="PANTHER" id="PTHR13691">
    <property type="entry name" value="RIBOSOMAL PROTEIN L2"/>
    <property type="match status" value="1"/>
</dbReference>
<dbReference type="Pfam" id="PF00181">
    <property type="entry name" value="Ribosomal_L2"/>
    <property type="match status" value="1"/>
</dbReference>
<dbReference type="Pfam" id="PF03947">
    <property type="entry name" value="Ribosomal_L2_C"/>
    <property type="match status" value="1"/>
</dbReference>
<dbReference type="PIRSF" id="PIRSF002158">
    <property type="entry name" value="Ribosomal_L2"/>
    <property type="match status" value="1"/>
</dbReference>
<dbReference type="SMART" id="SM01383">
    <property type="entry name" value="Ribosomal_L2"/>
    <property type="match status" value="1"/>
</dbReference>
<dbReference type="SMART" id="SM01382">
    <property type="entry name" value="Ribosomal_L2_C"/>
    <property type="match status" value="1"/>
</dbReference>
<dbReference type="SUPFAM" id="SSF50249">
    <property type="entry name" value="Nucleic acid-binding proteins"/>
    <property type="match status" value="1"/>
</dbReference>
<dbReference type="SUPFAM" id="SSF50104">
    <property type="entry name" value="Translation proteins SH3-like domain"/>
    <property type="match status" value="1"/>
</dbReference>
<dbReference type="PROSITE" id="PS00467">
    <property type="entry name" value="RIBOSOMAL_L2"/>
    <property type="match status" value="1"/>
</dbReference>
<name>RK2B_POPAL</name>
<reference key="1">
    <citation type="submission" date="2005-03" db="EMBL/GenBank/DDBJ databases">
        <title>Complete structure of the chloroplast genome of Populus alba.</title>
        <authorList>
            <person name="Okumura S."/>
            <person name="Yamashita A."/>
            <person name="Kanamoto H."/>
            <person name="Hattori M."/>
            <person name="Takase H."/>
            <person name="Tomizawa K."/>
        </authorList>
    </citation>
    <scope>NUCLEOTIDE SEQUENCE [LARGE SCALE GENOMIC DNA]</scope>
</reference>